<feature type="chain" id="PRO_1000006809" description="Phenylalanine--tRNA ligase alpha subunit">
    <location>
        <begin position="1"/>
        <end position="330"/>
    </location>
</feature>
<feature type="binding site" evidence="1">
    <location>
        <position position="246"/>
    </location>
    <ligand>
        <name>Mg(2+)</name>
        <dbReference type="ChEBI" id="CHEBI:18420"/>
        <note>shared with beta subunit</note>
    </ligand>
</feature>
<evidence type="ECO:0000255" key="1">
    <source>
        <dbReference type="HAMAP-Rule" id="MF_00281"/>
    </source>
</evidence>
<gene>
    <name evidence="1" type="primary">pheS</name>
    <name type="ordered locus">JJD26997_0916</name>
</gene>
<comment type="catalytic activity">
    <reaction evidence="1">
        <text>tRNA(Phe) + L-phenylalanine + ATP = L-phenylalanyl-tRNA(Phe) + AMP + diphosphate + H(+)</text>
        <dbReference type="Rhea" id="RHEA:19413"/>
        <dbReference type="Rhea" id="RHEA-COMP:9668"/>
        <dbReference type="Rhea" id="RHEA-COMP:9699"/>
        <dbReference type="ChEBI" id="CHEBI:15378"/>
        <dbReference type="ChEBI" id="CHEBI:30616"/>
        <dbReference type="ChEBI" id="CHEBI:33019"/>
        <dbReference type="ChEBI" id="CHEBI:58095"/>
        <dbReference type="ChEBI" id="CHEBI:78442"/>
        <dbReference type="ChEBI" id="CHEBI:78531"/>
        <dbReference type="ChEBI" id="CHEBI:456215"/>
        <dbReference type="EC" id="6.1.1.20"/>
    </reaction>
</comment>
<comment type="cofactor">
    <cofactor evidence="1">
        <name>Mg(2+)</name>
        <dbReference type="ChEBI" id="CHEBI:18420"/>
    </cofactor>
    <text evidence="1">Binds 2 magnesium ions per tetramer.</text>
</comment>
<comment type="subunit">
    <text evidence="1">Tetramer of two alpha and two beta subunits.</text>
</comment>
<comment type="subcellular location">
    <subcellularLocation>
        <location evidence="1">Cytoplasm</location>
    </subcellularLocation>
</comment>
<comment type="similarity">
    <text evidence="1">Belongs to the class-II aminoacyl-tRNA synthetase family. Phe-tRNA synthetase alpha subunit type 1 subfamily.</text>
</comment>
<proteinExistence type="inferred from homology"/>
<organism>
    <name type="scientific">Campylobacter jejuni subsp. doylei (strain ATCC BAA-1458 / RM4099 / 269.97)</name>
    <dbReference type="NCBI Taxonomy" id="360109"/>
    <lineage>
        <taxon>Bacteria</taxon>
        <taxon>Pseudomonadati</taxon>
        <taxon>Campylobacterota</taxon>
        <taxon>Epsilonproteobacteria</taxon>
        <taxon>Campylobacterales</taxon>
        <taxon>Campylobacteraceae</taxon>
        <taxon>Campylobacter</taxon>
    </lineage>
</organism>
<protein>
    <recommendedName>
        <fullName evidence="1">Phenylalanine--tRNA ligase alpha subunit</fullName>
        <ecNumber evidence="1">6.1.1.20</ecNumber>
    </recommendedName>
    <alternativeName>
        <fullName evidence="1">Phenylalanyl-tRNA synthetase alpha subunit</fullName>
        <shortName evidence="1">PheRS</shortName>
    </alternativeName>
</protein>
<name>SYFA_CAMJD</name>
<keyword id="KW-0030">Aminoacyl-tRNA synthetase</keyword>
<keyword id="KW-0067">ATP-binding</keyword>
<keyword id="KW-0963">Cytoplasm</keyword>
<keyword id="KW-0436">Ligase</keyword>
<keyword id="KW-0460">Magnesium</keyword>
<keyword id="KW-0479">Metal-binding</keyword>
<keyword id="KW-0547">Nucleotide-binding</keyword>
<keyword id="KW-0648">Protein biosynthesis</keyword>
<dbReference type="EC" id="6.1.1.20" evidence="1"/>
<dbReference type="EMBL" id="CP000768">
    <property type="protein sequence ID" value="ABS44466.1"/>
    <property type="molecule type" value="Genomic_DNA"/>
</dbReference>
<dbReference type="SMR" id="A7H3F0"/>
<dbReference type="KEGG" id="cjd:JJD26997_0916"/>
<dbReference type="HOGENOM" id="CLU_025086_0_1_7"/>
<dbReference type="Proteomes" id="UP000002302">
    <property type="component" value="Chromosome"/>
</dbReference>
<dbReference type="GO" id="GO:0005737">
    <property type="term" value="C:cytoplasm"/>
    <property type="evidence" value="ECO:0007669"/>
    <property type="project" value="UniProtKB-SubCell"/>
</dbReference>
<dbReference type="GO" id="GO:0005524">
    <property type="term" value="F:ATP binding"/>
    <property type="evidence" value="ECO:0007669"/>
    <property type="project" value="UniProtKB-UniRule"/>
</dbReference>
<dbReference type="GO" id="GO:0000287">
    <property type="term" value="F:magnesium ion binding"/>
    <property type="evidence" value="ECO:0007669"/>
    <property type="project" value="UniProtKB-UniRule"/>
</dbReference>
<dbReference type="GO" id="GO:0004826">
    <property type="term" value="F:phenylalanine-tRNA ligase activity"/>
    <property type="evidence" value="ECO:0007669"/>
    <property type="project" value="UniProtKB-UniRule"/>
</dbReference>
<dbReference type="GO" id="GO:0000049">
    <property type="term" value="F:tRNA binding"/>
    <property type="evidence" value="ECO:0007669"/>
    <property type="project" value="InterPro"/>
</dbReference>
<dbReference type="GO" id="GO:0006432">
    <property type="term" value="P:phenylalanyl-tRNA aminoacylation"/>
    <property type="evidence" value="ECO:0007669"/>
    <property type="project" value="UniProtKB-UniRule"/>
</dbReference>
<dbReference type="CDD" id="cd00496">
    <property type="entry name" value="PheRS_alpha_core"/>
    <property type="match status" value="1"/>
</dbReference>
<dbReference type="Gene3D" id="3.30.930.10">
    <property type="entry name" value="Bira Bifunctional Protein, Domain 2"/>
    <property type="match status" value="1"/>
</dbReference>
<dbReference type="HAMAP" id="MF_00281">
    <property type="entry name" value="Phe_tRNA_synth_alpha1"/>
    <property type="match status" value="1"/>
</dbReference>
<dbReference type="InterPro" id="IPR006195">
    <property type="entry name" value="aa-tRNA-synth_II"/>
</dbReference>
<dbReference type="InterPro" id="IPR045864">
    <property type="entry name" value="aa-tRNA-synth_II/BPL/LPL"/>
</dbReference>
<dbReference type="InterPro" id="IPR004529">
    <property type="entry name" value="Phe-tRNA-synth_IIc_asu"/>
</dbReference>
<dbReference type="InterPro" id="IPR004188">
    <property type="entry name" value="Phe-tRNA_ligase_II_N"/>
</dbReference>
<dbReference type="InterPro" id="IPR022911">
    <property type="entry name" value="Phe_tRNA_ligase_alpha1_bac"/>
</dbReference>
<dbReference type="InterPro" id="IPR002319">
    <property type="entry name" value="Phenylalanyl-tRNA_Synthase"/>
</dbReference>
<dbReference type="InterPro" id="IPR010978">
    <property type="entry name" value="tRNA-bd_arm"/>
</dbReference>
<dbReference type="NCBIfam" id="TIGR00468">
    <property type="entry name" value="pheS"/>
    <property type="match status" value="1"/>
</dbReference>
<dbReference type="PANTHER" id="PTHR11538:SF41">
    <property type="entry name" value="PHENYLALANINE--TRNA LIGASE, MITOCHONDRIAL"/>
    <property type="match status" value="1"/>
</dbReference>
<dbReference type="PANTHER" id="PTHR11538">
    <property type="entry name" value="PHENYLALANYL-TRNA SYNTHETASE"/>
    <property type="match status" value="1"/>
</dbReference>
<dbReference type="Pfam" id="PF02912">
    <property type="entry name" value="Phe_tRNA-synt_N"/>
    <property type="match status" value="1"/>
</dbReference>
<dbReference type="Pfam" id="PF01409">
    <property type="entry name" value="tRNA-synt_2d"/>
    <property type="match status" value="1"/>
</dbReference>
<dbReference type="SUPFAM" id="SSF55681">
    <property type="entry name" value="Class II aaRS and biotin synthetases"/>
    <property type="match status" value="1"/>
</dbReference>
<dbReference type="SUPFAM" id="SSF46589">
    <property type="entry name" value="tRNA-binding arm"/>
    <property type="match status" value="1"/>
</dbReference>
<dbReference type="PROSITE" id="PS50862">
    <property type="entry name" value="AA_TRNA_LIGASE_II"/>
    <property type="match status" value="1"/>
</dbReference>
<sequence>MQNFIEQIQKCENLNDLEAIRISVLGKKGILTEGFTKLKGLEDETKKEFAAKLNAQKEIFNKAYLAKFKDLENLALEERMKQDALNFNYFDESITTGALHPVMSTMDKIIEYFIALNFSIEKGPLIEDDFHNFEALNLPKSHPARDMQDTFYFDDKRLLRTQTSPVQIRTMLAQKPPIRMIAPGAVFRRDFDITHTPMFHQVEGLVVEEGQKVSFANLKSALEDFLRYMFGDVKVRFRPSFFPFTEPSAEVDISCVFCKEKGCRVCKHTGWLEVLGCGIVDPNVYNFVGYENVSGYAFGLGVERFAMLLHQIPDLRSLFEGDLRLLEQFR</sequence>
<accession>A7H3F0</accession>
<reference key="1">
    <citation type="submission" date="2007-07" db="EMBL/GenBank/DDBJ databases">
        <title>Complete genome sequence of Campylobacter jejuni subsp doylei 269.97 isolated from human blood.</title>
        <authorList>
            <person name="Fouts D.E."/>
            <person name="Mongodin E.F."/>
            <person name="Puiu D."/>
            <person name="Sebastian Y."/>
            <person name="Miller W.G."/>
            <person name="Mandrell R.E."/>
            <person name="Lastovica A.J."/>
            <person name="Nelson K.E."/>
        </authorList>
    </citation>
    <scope>NUCLEOTIDE SEQUENCE [LARGE SCALE GENOMIC DNA]</scope>
    <source>
        <strain>ATCC BAA-1458 / RM4099 / 269.97</strain>
    </source>
</reference>